<reference key="1">
    <citation type="journal article" date="2005" name="Nature">
        <title>The genome of the social amoeba Dictyostelium discoideum.</title>
        <authorList>
            <person name="Eichinger L."/>
            <person name="Pachebat J.A."/>
            <person name="Gloeckner G."/>
            <person name="Rajandream M.A."/>
            <person name="Sucgang R."/>
            <person name="Berriman M."/>
            <person name="Song J."/>
            <person name="Olsen R."/>
            <person name="Szafranski K."/>
            <person name="Xu Q."/>
            <person name="Tunggal B."/>
            <person name="Kummerfeld S."/>
            <person name="Madera M."/>
            <person name="Konfortov B.A."/>
            <person name="Rivero F."/>
            <person name="Bankier A.T."/>
            <person name="Lehmann R."/>
            <person name="Hamlin N."/>
            <person name="Davies R."/>
            <person name="Gaudet P."/>
            <person name="Fey P."/>
            <person name="Pilcher K."/>
            <person name="Chen G."/>
            <person name="Saunders D."/>
            <person name="Sodergren E.J."/>
            <person name="Davis P."/>
            <person name="Kerhornou A."/>
            <person name="Nie X."/>
            <person name="Hall N."/>
            <person name="Anjard C."/>
            <person name="Hemphill L."/>
            <person name="Bason N."/>
            <person name="Farbrother P."/>
            <person name="Desany B."/>
            <person name="Just E."/>
            <person name="Morio T."/>
            <person name="Rost R."/>
            <person name="Churcher C.M."/>
            <person name="Cooper J."/>
            <person name="Haydock S."/>
            <person name="van Driessche N."/>
            <person name="Cronin A."/>
            <person name="Goodhead I."/>
            <person name="Muzny D.M."/>
            <person name="Mourier T."/>
            <person name="Pain A."/>
            <person name="Lu M."/>
            <person name="Harper D."/>
            <person name="Lindsay R."/>
            <person name="Hauser H."/>
            <person name="James K.D."/>
            <person name="Quiles M."/>
            <person name="Madan Babu M."/>
            <person name="Saito T."/>
            <person name="Buchrieser C."/>
            <person name="Wardroper A."/>
            <person name="Felder M."/>
            <person name="Thangavelu M."/>
            <person name="Johnson D."/>
            <person name="Knights A."/>
            <person name="Loulseged H."/>
            <person name="Mungall K.L."/>
            <person name="Oliver K."/>
            <person name="Price C."/>
            <person name="Quail M.A."/>
            <person name="Urushihara H."/>
            <person name="Hernandez J."/>
            <person name="Rabbinowitsch E."/>
            <person name="Steffen D."/>
            <person name="Sanders M."/>
            <person name="Ma J."/>
            <person name="Kohara Y."/>
            <person name="Sharp S."/>
            <person name="Simmonds M.N."/>
            <person name="Spiegler S."/>
            <person name="Tivey A."/>
            <person name="Sugano S."/>
            <person name="White B."/>
            <person name="Walker D."/>
            <person name="Woodward J.R."/>
            <person name="Winckler T."/>
            <person name="Tanaka Y."/>
            <person name="Shaulsky G."/>
            <person name="Schleicher M."/>
            <person name="Weinstock G.M."/>
            <person name="Rosenthal A."/>
            <person name="Cox E.C."/>
            <person name="Chisholm R.L."/>
            <person name="Gibbs R.A."/>
            <person name="Loomis W.F."/>
            <person name="Platzer M."/>
            <person name="Kay R.R."/>
            <person name="Williams J.G."/>
            <person name="Dear P.H."/>
            <person name="Noegel A.A."/>
            <person name="Barrell B.G."/>
            <person name="Kuspa A."/>
        </authorList>
    </citation>
    <scope>NUCLEOTIDE SEQUENCE [LARGE SCALE GENOMIC DNA]</scope>
    <source>
        <strain>AX4</strain>
    </source>
</reference>
<sequence length="554" mass="61738">MTTHHRVRSSSNSSSNNINNNNNNNNNNNIHQLSSSRTMIDHHNSDPTSSSSPTNESQIHHFSNSNYNYNYDDVDDSTINSNSTNNNNKNRNIQNNNNQNISNNRDNNNNNINSNLNNQTNLINYNDDEDYDEDYEREIEDDEEYEEIGDEESSSGIGGDSEFNDSLNGSKAGSRNREIWINPNIELMLKIALSTTKNPYYYHNIAKKLEEMVGRPISEKLVRSQMTNLLGKNSKFFKHPYREIKSKPGIPKSLINSHNLREKQIWESCKNLITEIKSSPNYYSIGGGSFPTNNNNHNNASGASSSTSTPSTSSASSPASSSSSLSSLSNNNNNNNNNNNNNNNSNSINNSNNAHSIYPNGSNSGNSKNSSSSSSSSSSNNGNCSSNYPSPPLSENHLSLSLPSISKSHSNNTGSFGFSLSSPTTSSSNNSSNNNNNNNNSNQFFSSISDQQPSKKLHVVSPPLQSLQSIQPPISQLNNNNNNHHNNHHQNHHHQNHNHQHHSKKRKIRSYDSKHLEKFQVIREKVIETLSEIDDIINSMKNDSDNDNSEFEDC</sequence>
<protein>
    <recommendedName>
        <fullName>Uncharacterized protein DDB_G0281497</fullName>
    </recommendedName>
</protein>
<evidence type="ECO:0000256" key="1">
    <source>
        <dbReference type="SAM" id="MobiDB-lite"/>
    </source>
</evidence>
<organism>
    <name type="scientific">Dictyostelium discoideum</name>
    <name type="common">Social amoeba</name>
    <dbReference type="NCBI Taxonomy" id="44689"/>
    <lineage>
        <taxon>Eukaryota</taxon>
        <taxon>Amoebozoa</taxon>
        <taxon>Evosea</taxon>
        <taxon>Eumycetozoa</taxon>
        <taxon>Dictyostelia</taxon>
        <taxon>Dictyosteliales</taxon>
        <taxon>Dictyosteliaceae</taxon>
        <taxon>Dictyostelium</taxon>
    </lineage>
</organism>
<accession>Q54TU3</accession>
<proteinExistence type="predicted"/>
<gene>
    <name type="ORF">DDB_G0281497</name>
</gene>
<name>Y5626_DICDI</name>
<keyword id="KW-1185">Reference proteome</keyword>
<dbReference type="EMBL" id="AAFI02000041">
    <property type="protein sequence ID" value="EAL66730.1"/>
    <property type="molecule type" value="Genomic_DNA"/>
</dbReference>
<dbReference type="RefSeq" id="XP_640718.1">
    <property type="nucleotide sequence ID" value="XM_635626.1"/>
</dbReference>
<dbReference type="SMR" id="Q54TU3"/>
<dbReference type="FunCoup" id="Q54TU3">
    <property type="interactions" value="877"/>
</dbReference>
<dbReference type="GlyGen" id="Q54TU3">
    <property type="glycosylation" value="1 site"/>
</dbReference>
<dbReference type="PaxDb" id="44689-DDB0205626"/>
<dbReference type="EnsemblProtists" id="EAL66730">
    <property type="protein sequence ID" value="EAL66730"/>
    <property type="gene ID" value="DDB_G0281497"/>
</dbReference>
<dbReference type="GeneID" id="8623107"/>
<dbReference type="KEGG" id="ddi:DDB_G0281497"/>
<dbReference type="dictyBase" id="DDB_G0281497"/>
<dbReference type="VEuPathDB" id="AmoebaDB:DDB_G0281497"/>
<dbReference type="eggNOG" id="ENOG502RESJ">
    <property type="taxonomic scope" value="Eukaryota"/>
</dbReference>
<dbReference type="HOGENOM" id="CLU_492136_0_0_1"/>
<dbReference type="InParanoid" id="Q54TU3"/>
<dbReference type="OMA" id="NREIWIN"/>
<dbReference type="PRO" id="PR:Q54TU3"/>
<dbReference type="Proteomes" id="UP000002195">
    <property type="component" value="Chromosome 3"/>
</dbReference>
<dbReference type="GO" id="GO:0070847">
    <property type="term" value="C:core mediator complex"/>
    <property type="evidence" value="ECO:0000318"/>
    <property type="project" value="GO_Central"/>
</dbReference>
<feature type="chain" id="PRO_0000352435" description="Uncharacterized protein DDB_G0281497">
    <location>
        <begin position="1"/>
        <end position="554"/>
    </location>
</feature>
<feature type="region of interest" description="Disordered" evidence="1">
    <location>
        <begin position="1"/>
        <end position="127"/>
    </location>
</feature>
<feature type="region of interest" description="Disordered" evidence="1">
    <location>
        <begin position="139"/>
        <end position="173"/>
    </location>
</feature>
<feature type="region of interest" description="Disordered" evidence="1">
    <location>
        <begin position="293"/>
        <end position="395"/>
    </location>
</feature>
<feature type="region of interest" description="Disordered" evidence="1">
    <location>
        <begin position="416"/>
        <end position="509"/>
    </location>
</feature>
<feature type="compositionally biased region" description="Low complexity" evidence="1">
    <location>
        <begin position="9"/>
        <end position="30"/>
    </location>
</feature>
<feature type="compositionally biased region" description="Low complexity" evidence="1">
    <location>
        <begin position="46"/>
        <end position="55"/>
    </location>
</feature>
<feature type="compositionally biased region" description="Low complexity" evidence="1">
    <location>
        <begin position="63"/>
        <end position="125"/>
    </location>
</feature>
<feature type="compositionally biased region" description="Acidic residues" evidence="1">
    <location>
        <begin position="139"/>
        <end position="153"/>
    </location>
</feature>
<feature type="compositionally biased region" description="Polar residues" evidence="1">
    <location>
        <begin position="164"/>
        <end position="173"/>
    </location>
</feature>
<feature type="compositionally biased region" description="Low complexity" evidence="1">
    <location>
        <begin position="293"/>
        <end position="387"/>
    </location>
</feature>
<feature type="compositionally biased region" description="Low complexity" evidence="1">
    <location>
        <begin position="416"/>
        <end position="449"/>
    </location>
</feature>
<feature type="compositionally biased region" description="Low complexity" evidence="1">
    <location>
        <begin position="461"/>
        <end position="484"/>
    </location>
</feature>
<feature type="compositionally biased region" description="Basic residues" evidence="1">
    <location>
        <begin position="485"/>
        <end position="508"/>
    </location>
</feature>